<keyword id="KW-1003">Cell membrane</keyword>
<keyword id="KW-0413">Isomerase</keyword>
<keyword id="KW-0456">Lyase</keyword>
<keyword id="KW-0472">Membrane</keyword>
<keyword id="KW-1185">Reference proteome</keyword>
<keyword id="KW-0677">Repeat</keyword>
<accession>P33990</accession>
<accession>Q5NP64</accession>
<feature type="chain" id="PRO_0000072653" description="Squalene--hopene cyclase">
    <location>
        <begin position="1"/>
        <end position="658"/>
    </location>
</feature>
<feature type="repeat" description="PFTB 1">
    <location>
        <begin position="69"/>
        <end position="110"/>
    </location>
</feature>
<feature type="repeat" description="PFTB 2">
    <location>
        <begin position="418"/>
        <end position="459"/>
    </location>
</feature>
<feature type="repeat" description="PFTB 3">
    <location>
        <begin position="486"/>
        <end position="526"/>
    </location>
</feature>
<feature type="repeat" description="PFTB 4">
    <location>
        <begin position="534"/>
        <end position="584"/>
    </location>
</feature>
<feature type="active site" description="Proton donor" evidence="2">
    <location>
        <position position="392"/>
    </location>
</feature>
<feature type="sequence conflict" description="In Ref. 1, 2 and 3." evidence="3" ref="1 2 3">
    <original>H</original>
    <variation>Q</variation>
    <location>
        <position position="34"/>
    </location>
</feature>
<feature type="sequence conflict" description="In Ref. 1, 2 and 3." evidence="3" ref="1 2 3">
    <original>Q</original>
    <variation>E</variation>
    <location>
        <position position="64"/>
    </location>
</feature>
<feature type="sequence conflict" description="In Ref. 1, 2 and 3." evidence="3" ref="1 2 3">
    <original>R</original>
    <variation>H</variation>
    <location>
        <position position="411"/>
    </location>
</feature>
<feature type="sequence conflict" description="In Ref. 1, 2 and 3." evidence="3" ref="1 2 3">
    <original>I</original>
    <variation>V</variation>
    <location>
        <position position="534"/>
    </location>
</feature>
<sequence>MTVSTSSAFHHSPLSDDVEPIIQKATRALLEKQHQDGHWVFELEADATIPAEYILLKHYLGEPQDLEIEAKIGRYLRRIQGEHGGWSLFYGGDLDLSATVKAYFALKMIGDSPDAPHMLRARNEILARGGAMRANVFTRIQLALFGAMSWEHVPQMPVELMLMPEWFPVHINKMAYWARTVLVPLLVLQALKPVARNRRGILVDELFVPDVLPTLQESGDPIWRRFFSALDKVLHKVEPYWPKNMRAKAIHSCVHFVTERLNGEDGLGAIYPAIANSVMMYDALGYPENHPERAIARRAVEKLMVLDGTEDQGDKEVYCQPCLSPIWDTALVAHAMLEVGGDEAEKSAISALSWLKPQQILDVKGDWAWRRPDLRPGGWAFQYRNDYYPDVDDTAVVTMAMDRAAKLSDLRDDFEESKARAMEWTIGMQSDNGGWGAFDANNSYTYLNNIPFADHGALLDPPTVDVSARCVSMMAQAGISITDPKMKAAVDYLLKEQEEDGSWFGRWGVNYIYGTWSALCALNVAALPHDHLAIQKAVAWLKTIQNEDGGWGENCDSYALDYSGYEPMDSTASQTAWALLGLMAVGEANSEAVTKGINWLAQNQDEEGLWKEDYYSGGGFPRVFYLRYHGYSKYFPLWALARYRNLKKANQPIVHYGM</sequence>
<organism>
    <name type="scientific">Zymomonas mobilis subsp. mobilis (strain ATCC 31821 / ZM4 / CP4)</name>
    <dbReference type="NCBI Taxonomy" id="264203"/>
    <lineage>
        <taxon>Bacteria</taxon>
        <taxon>Pseudomonadati</taxon>
        <taxon>Pseudomonadota</taxon>
        <taxon>Alphaproteobacteria</taxon>
        <taxon>Sphingomonadales</taxon>
        <taxon>Zymomonadaceae</taxon>
        <taxon>Zymomonas</taxon>
    </lineage>
</organism>
<name>SQHC_ZYMMO</name>
<reference key="1">
    <citation type="journal article" date="1995" name="Microbiology">
        <title>Zymomonas mobilis squalene-hopene cyclase gene (shc): cloning, DNA sequence analysis, and expression in Escherichia coli.</title>
        <authorList>
            <person name="Reipen I.G."/>
            <person name="Poralla K."/>
            <person name="Sahm H."/>
            <person name="Sprenger G.A."/>
        </authorList>
    </citation>
    <scope>NUCLEOTIDE SEQUENCE [GENOMIC DNA]</scope>
    <source>
        <strain>ATCC 31821 / ZM4 / CP4</strain>
    </source>
</reference>
<reference key="2">
    <citation type="submission" date="1997-11" db="EMBL/GenBank/DDBJ databases">
        <authorList>
            <person name="Reipen I.G."/>
            <person name="Sahm H."/>
            <person name="Sprenger G.A."/>
        </authorList>
    </citation>
    <scope>NUCLEOTIDE SEQUENCE [GENOMIC DNA]</scope>
    <source>
        <strain>ATCC 31821 / ZM4 / CP4</strain>
    </source>
</reference>
<reference key="3">
    <citation type="submission" date="1999-11" db="EMBL/GenBank/DDBJ databases">
        <authorList>
            <person name="Um H.W."/>
        </authorList>
    </citation>
    <scope>NUCLEOTIDE SEQUENCE [GENOMIC DNA]</scope>
    <source>
        <strain>ATCC 31821 / ZM4 / CP4</strain>
    </source>
</reference>
<reference key="4">
    <citation type="journal article" date="2005" name="Nat. Biotechnol.">
        <title>The genome sequence of the ethanologenic bacterium Zymomonas mobilis ZM4.</title>
        <authorList>
            <person name="Seo J.-S."/>
            <person name="Chong H."/>
            <person name="Park H.S."/>
            <person name="Yoon K.-O."/>
            <person name="Jung C."/>
            <person name="Kim J.J."/>
            <person name="Hong J.H."/>
            <person name="Kim H."/>
            <person name="Kim J.-H."/>
            <person name="Kil J.-I."/>
            <person name="Park C.J."/>
            <person name="Oh H.-M."/>
            <person name="Lee J.-S."/>
            <person name="Jin S.-J."/>
            <person name="Um H.-W."/>
            <person name="Lee H.-J."/>
            <person name="Oh S.-J."/>
            <person name="Kim J.Y."/>
            <person name="Kang H.L."/>
            <person name="Lee S.Y."/>
            <person name="Lee K.J."/>
            <person name="Kang H.S."/>
        </authorList>
    </citation>
    <scope>NUCLEOTIDE SEQUENCE [LARGE SCALE GENOMIC DNA]</scope>
    <source>
        <strain>ATCC 31821 / ZM4 / CP4</strain>
    </source>
</reference>
<gene>
    <name type="primary">shc</name>
    <name type="ordered locus">ZMO0872</name>
</gene>
<comment type="function">
    <text>Catalyzes the cyclization of squalene into hopene.</text>
</comment>
<comment type="catalytic activity">
    <reaction>
        <text>squalene = hop-22(29)-ene</text>
        <dbReference type="Rhea" id="RHEA:17637"/>
        <dbReference type="ChEBI" id="CHEBI:4648"/>
        <dbReference type="ChEBI" id="CHEBI:15440"/>
        <dbReference type="EC" id="5.4.99.17"/>
    </reaction>
</comment>
<comment type="catalytic activity">
    <reaction>
        <text>squalene + H2O = hopan-22-ol</text>
        <dbReference type="Rhea" id="RHEA:16561"/>
        <dbReference type="ChEBI" id="CHEBI:15377"/>
        <dbReference type="ChEBI" id="CHEBI:15440"/>
        <dbReference type="ChEBI" id="CHEBI:36484"/>
        <dbReference type="EC" id="4.2.1.129"/>
    </reaction>
</comment>
<comment type="pathway">
    <text>Secondary metabolite biosynthesis; hopanoid biosynthesis.</text>
</comment>
<comment type="subcellular location">
    <subcellularLocation>
        <location evidence="1">Cell membrane</location>
        <topology evidence="1">Peripheral membrane protein</topology>
    </subcellularLocation>
</comment>
<comment type="similarity">
    <text evidence="3">Belongs to the terpene cyclase/mutase family.</text>
</comment>
<evidence type="ECO:0000250" key="1"/>
<evidence type="ECO:0000250" key="2">
    <source>
        <dbReference type="UniProtKB" id="P48449"/>
    </source>
</evidence>
<evidence type="ECO:0000305" key="3"/>
<dbReference type="EC" id="4.2.1.129"/>
<dbReference type="EC" id="5.4.99.17"/>
<dbReference type="EMBL" id="X80766">
    <property type="protein sequence ID" value="CAA56749.1"/>
    <property type="molecule type" value="Genomic_DNA"/>
</dbReference>
<dbReference type="EMBL" id="X73561">
    <property type="protein sequence ID" value="CAA51958.1"/>
    <property type="molecule type" value="Genomic_DNA"/>
</dbReference>
<dbReference type="EMBL" id="AJ001401">
    <property type="protein sequence ID" value="CAA04735.1"/>
    <property type="molecule type" value="Genomic_DNA"/>
</dbReference>
<dbReference type="EMBL" id="AF203881">
    <property type="protein sequence ID" value="AAF12829.1"/>
    <property type="molecule type" value="Genomic_DNA"/>
</dbReference>
<dbReference type="EMBL" id="AE008692">
    <property type="protein sequence ID" value="AAV89496.1"/>
    <property type="molecule type" value="Genomic_DNA"/>
</dbReference>
<dbReference type="PIR" id="S37494">
    <property type="entry name" value="S37494"/>
</dbReference>
<dbReference type="RefSeq" id="WP_011240738.1">
    <property type="nucleotide sequence ID" value="NZ_CP035711.1"/>
</dbReference>
<dbReference type="SMR" id="P33990"/>
<dbReference type="STRING" id="264203.ZMO0872"/>
<dbReference type="GeneID" id="79903973"/>
<dbReference type="KEGG" id="zmo:ZMO0872"/>
<dbReference type="eggNOG" id="COG1657">
    <property type="taxonomic scope" value="Bacteria"/>
</dbReference>
<dbReference type="HOGENOM" id="CLU_019345_0_0_5"/>
<dbReference type="BRENDA" id="5.4.99.17">
    <property type="organism ID" value="6765"/>
</dbReference>
<dbReference type="UniPathway" id="UPA00337"/>
<dbReference type="Proteomes" id="UP000001173">
    <property type="component" value="Chromosome"/>
</dbReference>
<dbReference type="GO" id="GO:0005811">
    <property type="term" value="C:lipid droplet"/>
    <property type="evidence" value="ECO:0007669"/>
    <property type="project" value="InterPro"/>
</dbReference>
<dbReference type="GO" id="GO:0005886">
    <property type="term" value="C:plasma membrane"/>
    <property type="evidence" value="ECO:0007669"/>
    <property type="project" value="UniProtKB-SubCell"/>
</dbReference>
<dbReference type="GO" id="GO:0016829">
    <property type="term" value="F:lyase activity"/>
    <property type="evidence" value="ECO:0007669"/>
    <property type="project" value="UniProtKB-KW"/>
</dbReference>
<dbReference type="GO" id="GO:0051007">
    <property type="term" value="F:squalene-hopene cyclase activity"/>
    <property type="evidence" value="ECO:0007669"/>
    <property type="project" value="UniProtKB-EC"/>
</dbReference>
<dbReference type="GO" id="GO:0016104">
    <property type="term" value="P:triterpenoid biosynthetic process"/>
    <property type="evidence" value="ECO:0007669"/>
    <property type="project" value="InterPro"/>
</dbReference>
<dbReference type="CDD" id="cd02892">
    <property type="entry name" value="SQCY_1"/>
    <property type="match status" value="1"/>
</dbReference>
<dbReference type="Gene3D" id="1.50.10.20">
    <property type="match status" value="2"/>
</dbReference>
<dbReference type="InterPro" id="IPR006400">
    <property type="entry name" value="Hopene-cyclase"/>
</dbReference>
<dbReference type="InterPro" id="IPR032696">
    <property type="entry name" value="SQ_cyclase_C"/>
</dbReference>
<dbReference type="InterPro" id="IPR032697">
    <property type="entry name" value="SQ_cyclase_N"/>
</dbReference>
<dbReference type="InterPro" id="IPR018333">
    <property type="entry name" value="Squalene_cyclase"/>
</dbReference>
<dbReference type="InterPro" id="IPR002365">
    <property type="entry name" value="Terpene_synthase_CS"/>
</dbReference>
<dbReference type="InterPro" id="IPR008930">
    <property type="entry name" value="Terpenoid_cyclase/PrenylTrfase"/>
</dbReference>
<dbReference type="NCBIfam" id="TIGR01507">
    <property type="entry name" value="hopene_cyclase"/>
    <property type="match status" value="1"/>
</dbReference>
<dbReference type="NCBIfam" id="TIGR01787">
    <property type="entry name" value="squalene_cyclas"/>
    <property type="match status" value="1"/>
</dbReference>
<dbReference type="PANTHER" id="PTHR11764:SF20">
    <property type="entry name" value="LANOSTEROL SYNTHASE"/>
    <property type="match status" value="1"/>
</dbReference>
<dbReference type="PANTHER" id="PTHR11764">
    <property type="entry name" value="TERPENE CYCLASE/MUTASE FAMILY MEMBER"/>
    <property type="match status" value="1"/>
</dbReference>
<dbReference type="Pfam" id="PF13243">
    <property type="entry name" value="SQHop_cyclase_C"/>
    <property type="match status" value="1"/>
</dbReference>
<dbReference type="Pfam" id="PF13249">
    <property type="entry name" value="SQHop_cyclase_N"/>
    <property type="match status" value="1"/>
</dbReference>
<dbReference type="SFLD" id="SFLDG01016">
    <property type="entry name" value="Prenyltransferase_Like_2"/>
    <property type="match status" value="1"/>
</dbReference>
<dbReference type="SUPFAM" id="SSF48239">
    <property type="entry name" value="Terpenoid cyclases/Protein prenyltransferases"/>
    <property type="match status" value="2"/>
</dbReference>
<dbReference type="PROSITE" id="PS01074">
    <property type="entry name" value="TERPENE_SYNTHASES"/>
    <property type="match status" value="1"/>
</dbReference>
<proteinExistence type="inferred from homology"/>
<protein>
    <recommendedName>
        <fullName>Squalene--hopene cyclase</fullName>
        <ecNumber>4.2.1.129</ecNumber>
        <ecNumber>5.4.99.17</ecNumber>
    </recommendedName>
    <alternativeName>
        <fullName>Squalene--hopanol cyclase</fullName>
    </alternativeName>
</protein>